<reference key="1">
    <citation type="submission" date="2004-12" db="EMBL/GenBank/DDBJ databases">
        <title>The genome sequence of Borrelia hermsii and Borrelia turicatae: comparative analysis of two agents of endemic N. America relapsing fever.</title>
        <authorList>
            <person name="Porcella S.F."/>
            <person name="Raffel S.J."/>
            <person name="Schrumpf M.E."/>
            <person name="Montgomery B."/>
            <person name="Smith T."/>
            <person name="Schwan T.G."/>
        </authorList>
    </citation>
    <scope>NUCLEOTIDE SEQUENCE [LARGE SCALE GENOMIC DNA]</scope>
    <source>
        <strain>HS1 / DAH</strain>
    </source>
</reference>
<proteinExistence type="inferred from homology"/>
<name>RL1_BORHD</name>
<feature type="chain" id="PRO_1000141366" description="Large ribosomal subunit protein uL1">
    <location>
        <begin position="1"/>
        <end position="224"/>
    </location>
</feature>
<comment type="function">
    <text evidence="1">Binds directly to 23S rRNA. The L1 stalk is quite mobile in the ribosome, and is involved in E site tRNA release.</text>
</comment>
<comment type="function">
    <text evidence="1">Protein L1 is also a translational repressor protein, it controls the translation of the L11 operon by binding to its mRNA.</text>
</comment>
<comment type="subunit">
    <text evidence="1">Part of the 50S ribosomal subunit.</text>
</comment>
<comment type="similarity">
    <text evidence="1">Belongs to the universal ribosomal protein uL1 family.</text>
</comment>
<organism>
    <name type="scientific">Borrelia hermsii (strain HS1 / DAH)</name>
    <dbReference type="NCBI Taxonomy" id="314723"/>
    <lineage>
        <taxon>Bacteria</taxon>
        <taxon>Pseudomonadati</taxon>
        <taxon>Spirochaetota</taxon>
        <taxon>Spirochaetia</taxon>
        <taxon>Spirochaetales</taxon>
        <taxon>Borreliaceae</taxon>
        <taxon>Borrelia</taxon>
    </lineage>
</organism>
<sequence length="224" mass="24918">MAKSGKKYMQAISKIDKLKSYSIDDAISLLKEIKFVKFDETIDVSINLNLKKNHTVRDTVVLPNQFMKEKRILVFAKGDRAQEAKEAGAAYVGDDDLINKVKGGFSDFDIVVATPDMMKDVGKLGPILGKRGLMPNPKTQTITNDLKGTIAGLKKGRTEFRANKNGVLNFSVGKSSMDNKKIKENYDEFIKELLKRRPSDLKGTFVDSVYISSTMGPSVKIDFV</sequence>
<dbReference type="EMBL" id="CP000048">
    <property type="protein sequence ID" value="AAX16901.1"/>
    <property type="molecule type" value="Genomic_DNA"/>
</dbReference>
<dbReference type="RefSeq" id="WP_012422158.1">
    <property type="nucleotide sequence ID" value="NZ_CP073136.1"/>
</dbReference>
<dbReference type="SMR" id="B2S095"/>
<dbReference type="KEGG" id="bhr:BH0392"/>
<dbReference type="HOGENOM" id="CLU_062853_0_0_12"/>
<dbReference type="Proteomes" id="UP000008834">
    <property type="component" value="Chromosome"/>
</dbReference>
<dbReference type="GO" id="GO:0015934">
    <property type="term" value="C:large ribosomal subunit"/>
    <property type="evidence" value="ECO:0007669"/>
    <property type="project" value="InterPro"/>
</dbReference>
<dbReference type="GO" id="GO:0019843">
    <property type="term" value="F:rRNA binding"/>
    <property type="evidence" value="ECO:0007669"/>
    <property type="project" value="UniProtKB-UniRule"/>
</dbReference>
<dbReference type="GO" id="GO:0003735">
    <property type="term" value="F:structural constituent of ribosome"/>
    <property type="evidence" value="ECO:0007669"/>
    <property type="project" value="InterPro"/>
</dbReference>
<dbReference type="GO" id="GO:0000049">
    <property type="term" value="F:tRNA binding"/>
    <property type="evidence" value="ECO:0007669"/>
    <property type="project" value="UniProtKB-KW"/>
</dbReference>
<dbReference type="GO" id="GO:0006417">
    <property type="term" value="P:regulation of translation"/>
    <property type="evidence" value="ECO:0007669"/>
    <property type="project" value="UniProtKB-KW"/>
</dbReference>
<dbReference type="GO" id="GO:0006412">
    <property type="term" value="P:translation"/>
    <property type="evidence" value="ECO:0007669"/>
    <property type="project" value="UniProtKB-UniRule"/>
</dbReference>
<dbReference type="CDD" id="cd00403">
    <property type="entry name" value="Ribosomal_L1"/>
    <property type="match status" value="1"/>
</dbReference>
<dbReference type="FunFam" id="3.40.50.790:FF:000001">
    <property type="entry name" value="50S ribosomal protein L1"/>
    <property type="match status" value="1"/>
</dbReference>
<dbReference type="Gene3D" id="3.30.190.20">
    <property type="match status" value="1"/>
</dbReference>
<dbReference type="Gene3D" id="3.40.50.790">
    <property type="match status" value="1"/>
</dbReference>
<dbReference type="HAMAP" id="MF_01318_B">
    <property type="entry name" value="Ribosomal_uL1_B"/>
    <property type="match status" value="1"/>
</dbReference>
<dbReference type="InterPro" id="IPR005878">
    <property type="entry name" value="Ribosom_uL1_bac-type"/>
</dbReference>
<dbReference type="InterPro" id="IPR002143">
    <property type="entry name" value="Ribosomal_uL1"/>
</dbReference>
<dbReference type="InterPro" id="IPR023674">
    <property type="entry name" value="Ribosomal_uL1-like"/>
</dbReference>
<dbReference type="InterPro" id="IPR028364">
    <property type="entry name" value="Ribosomal_uL1/biogenesis"/>
</dbReference>
<dbReference type="InterPro" id="IPR016095">
    <property type="entry name" value="Ribosomal_uL1_3-a/b-sand"/>
</dbReference>
<dbReference type="InterPro" id="IPR023673">
    <property type="entry name" value="Ribosomal_uL1_CS"/>
</dbReference>
<dbReference type="NCBIfam" id="TIGR01169">
    <property type="entry name" value="rplA_bact"/>
    <property type="match status" value="1"/>
</dbReference>
<dbReference type="PANTHER" id="PTHR36427">
    <property type="entry name" value="54S RIBOSOMAL PROTEIN L1, MITOCHONDRIAL"/>
    <property type="match status" value="1"/>
</dbReference>
<dbReference type="PANTHER" id="PTHR36427:SF3">
    <property type="entry name" value="LARGE RIBOSOMAL SUBUNIT PROTEIN UL1M"/>
    <property type="match status" value="1"/>
</dbReference>
<dbReference type="Pfam" id="PF00687">
    <property type="entry name" value="Ribosomal_L1"/>
    <property type="match status" value="1"/>
</dbReference>
<dbReference type="PIRSF" id="PIRSF002155">
    <property type="entry name" value="Ribosomal_L1"/>
    <property type="match status" value="1"/>
</dbReference>
<dbReference type="SUPFAM" id="SSF56808">
    <property type="entry name" value="Ribosomal protein L1"/>
    <property type="match status" value="1"/>
</dbReference>
<dbReference type="PROSITE" id="PS01199">
    <property type="entry name" value="RIBOSOMAL_L1"/>
    <property type="match status" value="1"/>
</dbReference>
<gene>
    <name evidence="1" type="primary">rplA</name>
    <name type="ordered locus">BH0392</name>
</gene>
<keyword id="KW-0678">Repressor</keyword>
<keyword id="KW-0687">Ribonucleoprotein</keyword>
<keyword id="KW-0689">Ribosomal protein</keyword>
<keyword id="KW-0694">RNA-binding</keyword>
<keyword id="KW-0699">rRNA-binding</keyword>
<keyword id="KW-0810">Translation regulation</keyword>
<keyword id="KW-0820">tRNA-binding</keyword>
<accession>B2S095</accession>
<evidence type="ECO:0000255" key="1">
    <source>
        <dbReference type="HAMAP-Rule" id="MF_01318"/>
    </source>
</evidence>
<evidence type="ECO:0000305" key="2"/>
<protein>
    <recommendedName>
        <fullName evidence="1">Large ribosomal subunit protein uL1</fullName>
    </recommendedName>
    <alternativeName>
        <fullName evidence="2">50S ribosomal protein L1</fullName>
    </alternativeName>
</protein>